<protein>
    <recommendedName>
        <fullName evidence="2">Glucan endo-1,3-beta-glucosidase</fullName>
        <ecNumber>3.2.1.39</ecNumber>
    </recommendedName>
    <alternativeName>
        <fullName evidence="2">(1-&gt;3)-beta-glucan endohydrolase</fullName>
        <shortName evidence="2">(1-&gt;3)-beta-glucanase</shortName>
    </alternativeName>
    <alternativeName>
        <fullName evidence="2">Beta-1,3-endoglucanase</fullName>
    </alternativeName>
</protein>
<sequence>MALTRNRPFVVVLLLGFVIMSTITIGAQSIGVCYGRNGNNLPSASQVINLYKSNGIGSMRIYDPNSDTLQALRGSDIELILDVPNTDLQSLASDASAAATWVQNNVVNYASEVKFRYIAVGNEVLPTGSNAQYAQYVLPAMKNVQSAITSAGLQDQIKVSTATFSAVLGKSYPPSEGSFSDDVSSFINPIISFLAENGSPLLANIYPYFSYTGDTQNIRLDYALFTASGVVVQDGSYQYQNLFDALLDALYAALEKAGGSNLKIVVSESGWPSEGGTAATVDNARTYYKNLINHVKGGTPRKSGAIETYLFAMFDENQKTGLETEKHFGLFTPGQESKYQISFS</sequence>
<keyword id="KW-0903">Direct protein sequencing</keyword>
<keyword id="KW-0326">Glycosidase</keyword>
<keyword id="KW-0378">Hydrolase</keyword>
<keyword id="KW-0568">Pathogenesis-related protein</keyword>
<keyword id="KW-0611">Plant defense</keyword>
<keyword id="KW-1185">Reference proteome</keyword>
<keyword id="KW-0732">Signal</keyword>
<reference key="1">
    <citation type="journal article" date="2007" name="Nature">
        <title>The grapevine genome sequence suggests ancestral hexaploidization in major angiosperm phyla.</title>
        <authorList>
            <person name="Jaillon O."/>
            <person name="Aury J.-M."/>
            <person name="Noel B."/>
            <person name="Policriti A."/>
            <person name="Clepet C."/>
            <person name="Casagrande A."/>
            <person name="Choisne N."/>
            <person name="Aubourg S."/>
            <person name="Vitulo N."/>
            <person name="Jubin C."/>
            <person name="Vezzi A."/>
            <person name="Legeai F."/>
            <person name="Hugueney P."/>
            <person name="Dasilva C."/>
            <person name="Horner D."/>
            <person name="Mica E."/>
            <person name="Jublot D."/>
            <person name="Poulain J."/>
            <person name="Bruyere C."/>
            <person name="Billault A."/>
            <person name="Segurens B."/>
            <person name="Gouyvenoux M."/>
            <person name="Ugarte E."/>
            <person name="Cattonaro F."/>
            <person name="Anthouard V."/>
            <person name="Vico V."/>
            <person name="Del Fabbro C."/>
            <person name="Alaux M."/>
            <person name="Di Gaspero G."/>
            <person name="Dumas V."/>
            <person name="Felice N."/>
            <person name="Paillard S."/>
            <person name="Juman I."/>
            <person name="Moroldo M."/>
            <person name="Scalabrin S."/>
            <person name="Canaguier A."/>
            <person name="Le Clainche I."/>
            <person name="Malacrida G."/>
            <person name="Durand E."/>
            <person name="Pesole G."/>
            <person name="Laucou V."/>
            <person name="Chatelet P."/>
            <person name="Merdinoglu D."/>
            <person name="Delledonne M."/>
            <person name="Pezzotti M."/>
            <person name="Lecharny A."/>
            <person name="Scarpelli C."/>
            <person name="Artiguenave F."/>
            <person name="Pe M.E."/>
            <person name="Valle G."/>
            <person name="Morgante M."/>
            <person name="Caboche M."/>
            <person name="Adam-Blondon A.-F."/>
            <person name="Weissenbach J."/>
            <person name="Quetier F."/>
            <person name="Wincker P."/>
        </authorList>
    </citation>
    <scope>NUCLEOTIDE SEQUENCE [LARGE SCALE GENOMIC DNA]</scope>
    <source>
        <strain evidence="4">cv. Pinot noir / PN40024</strain>
    </source>
</reference>
<reference evidence="5" key="2">
    <citation type="submission" date="2008-07" db="UniProtKB">
        <authorList>
            <person name="Belchi-Navarro S."/>
            <person name="Almagro L."/>
            <person name="Bru R."/>
            <person name="Pedreno M.A."/>
        </authorList>
    </citation>
    <scope>PROTEIN SEQUENCE OF 143-158</scope>
</reference>
<evidence type="ECO:0000250" key="1">
    <source>
        <dbReference type="UniProtKB" id="O22317"/>
    </source>
</evidence>
<evidence type="ECO:0000250" key="2">
    <source>
        <dbReference type="UniProtKB" id="Q03467"/>
    </source>
</evidence>
<evidence type="ECO:0000255" key="3"/>
<evidence type="ECO:0000269" key="4">
    <source>
    </source>
</evidence>
<evidence type="ECO:0000305" key="5"/>
<name>E13B_VITVI</name>
<gene>
    <name type="ordered locus">VIT_06s0061g00120</name>
</gene>
<accession>A7PQW3</accession>
<accession>F6GWB5</accession>
<organism>
    <name type="scientific">Vitis vinifera</name>
    <name type="common">Grape</name>
    <dbReference type="NCBI Taxonomy" id="29760"/>
    <lineage>
        <taxon>Eukaryota</taxon>
        <taxon>Viridiplantae</taxon>
        <taxon>Streptophyta</taxon>
        <taxon>Embryophyta</taxon>
        <taxon>Tracheophyta</taxon>
        <taxon>Spermatophyta</taxon>
        <taxon>Magnoliopsida</taxon>
        <taxon>eudicotyledons</taxon>
        <taxon>Gunneridae</taxon>
        <taxon>Pentapetalae</taxon>
        <taxon>rosids</taxon>
        <taxon>Vitales</taxon>
        <taxon>Vitaceae</taxon>
        <taxon>Viteae</taxon>
        <taxon>Vitis</taxon>
    </lineage>
</organism>
<comment type="function">
    <text evidence="2">Implicated in the defense of plants against pathogens.</text>
</comment>
<comment type="catalytic activity">
    <reaction>
        <text>Hydrolysis of (1-&gt;3)-beta-D-glucosidic linkages in (1-&gt;3)-beta-D-glucans.</text>
        <dbReference type="EC" id="3.2.1.39"/>
    </reaction>
</comment>
<comment type="similarity">
    <text evidence="3">Belongs to the glycosyl hydrolase 17 family.</text>
</comment>
<proteinExistence type="evidence at protein level"/>
<dbReference type="EC" id="3.2.1.39"/>
<dbReference type="EMBL" id="FN594957">
    <property type="protein sequence ID" value="CCB44250.1"/>
    <property type="molecule type" value="Genomic_DNA"/>
</dbReference>
<dbReference type="RefSeq" id="XP_002278123.1">
    <property type="nucleotide sequence ID" value="XM_002278087.4"/>
</dbReference>
<dbReference type="SMR" id="A7PQW3"/>
<dbReference type="STRING" id="29760.A7PQW3"/>
<dbReference type="PaxDb" id="29760-VIT_06s0061g00120.t01"/>
<dbReference type="EnsemblPlants" id="Vitvi06g01917_t001">
    <property type="protein sequence ID" value="Vitvi06g01917_P001"/>
    <property type="gene ID" value="Vitvi06g01917"/>
</dbReference>
<dbReference type="Gramene" id="Vitvi06g01917_t001">
    <property type="protein sequence ID" value="Vitvi06g01917_P001"/>
    <property type="gene ID" value="Vitvi06g01917"/>
</dbReference>
<dbReference type="eggNOG" id="ENOG502QQ3M">
    <property type="taxonomic scope" value="Eukaryota"/>
</dbReference>
<dbReference type="HOGENOM" id="CLU_024953_0_0_1"/>
<dbReference type="InParanoid" id="A7PQW3"/>
<dbReference type="OrthoDB" id="941679at2759"/>
<dbReference type="BRENDA" id="3.2.1.39">
    <property type="organism ID" value="6671"/>
</dbReference>
<dbReference type="Proteomes" id="UP000009183">
    <property type="component" value="Chromosome 6"/>
</dbReference>
<dbReference type="ExpressionAtlas" id="A7PQW3">
    <property type="expression patterns" value="baseline and differential"/>
</dbReference>
<dbReference type="GO" id="GO:0042973">
    <property type="term" value="F:glucan endo-1,3-beta-D-glucosidase activity"/>
    <property type="evidence" value="ECO:0007669"/>
    <property type="project" value="UniProtKB-EC"/>
</dbReference>
<dbReference type="GO" id="GO:0005975">
    <property type="term" value="P:carbohydrate metabolic process"/>
    <property type="evidence" value="ECO:0007669"/>
    <property type="project" value="InterPro"/>
</dbReference>
<dbReference type="GO" id="GO:0006952">
    <property type="term" value="P:defense response"/>
    <property type="evidence" value="ECO:0007669"/>
    <property type="project" value="UniProtKB-KW"/>
</dbReference>
<dbReference type="FunFam" id="3.20.20.80:FF:000010">
    <property type="entry name" value="glucan endo-1,3-beta-glucosidase, basic"/>
    <property type="match status" value="1"/>
</dbReference>
<dbReference type="Gene3D" id="3.20.20.80">
    <property type="entry name" value="Glycosidases"/>
    <property type="match status" value="1"/>
</dbReference>
<dbReference type="InterPro" id="IPR000490">
    <property type="entry name" value="Glyco_hydro_17"/>
</dbReference>
<dbReference type="InterPro" id="IPR044965">
    <property type="entry name" value="Glyco_hydro_17_plant"/>
</dbReference>
<dbReference type="InterPro" id="IPR017853">
    <property type="entry name" value="Glycoside_hydrolase_SF"/>
</dbReference>
<dbReference type="PANTHER" id="PTHR32227">
    <property type="entry name" value="GLUCAN ENDO-1,3-BETA-GLUCOSIDASE BG1-RELATED-RELATED"/>
    <property type="match status" value="1"/>
</dbReference>
<dbReference type="Pfam" id="PF00332">
    <property type="entry name" value="Glyco_hydro_17"/>
    <property type="match status" value="1"/>
</dbReference>
<dbReference type="SUPFAM" id="SSF51445">
    <property type="entry name" value="(Trans)glycosidases"/>
    <property type="match status" value="1"/>
</dbReference>
<dbReference type="PROSITE" id="PS00587">
    <property type="entry name" value="GLYCOSYL_HYDROL_F17"/>
    <property type="match status" value="1"/>
</dbReference>
<feature type="signal peptide" evidence="3">
    <location>
        <begin position="1"/>
        <end position="27"/>
    </location>
</feature>
<feature type="chain" id="PRO_0000363744" description="Glucan endo-1,3-beta-glucosidase">
    <location>
        <begin position="28"/>
        <end position="344"/>
    </location>
</feature>
<feature type="active site" description="Proton donor" evidence="1">
    <location>
        <position position="123"/>
    </location>
</feature>
<feature type="active site" description="Nucleophile" evidence="1">
    <location>
        <position position="268"/>
    </location>
</feature>